<comment type="function">
    <text evidence="1">Found at the monomer-monomer interface of the photosystem II (PS II) dimer, plays a role in assembly and dimerization of PSII. PSII is a light-driven water plastoquinone oxidoreductase, using light energy to abstract electrons from H(2)O, generating a proton gradient subsequently used for ATP formation.</text>
</comment>
<comment type="subunit">
    <text evidence="1">PSII is composed of 1 copy each of membrane proteins PsbA, PsbB, PsbC, PsbD, PsbE, PsbF, PsbH, PsbI, PsbJ, PsbK, PsbL, PsbM, PsbT, PsbY, PsbZ, Psb30/Ycf12, at least 3 peripheral proteins of the oxygen-evolving complex and a large number of cofactors. It forms dimeric complexes.</text>
</comment>
<comment type="subcellular location">
    <subcellularLocation>
        <location evidence="1">Plastid</location>
        <location evidence="1">Chloroplast thylakoid membrane</location>
        <topology evidence="1">Single-pass membrane protein</topology>
    </subcellularLocation>
</comment>
<comment type="similarity">
    <text evidence="1">Belongs to the PsbT family.</text>
</comment>
<sequence length="35" mass="4089">MEALVYTFLLVGTLGIIFFAIFFREPPKIEVKEKK</sequence>
<geneLocation type="chloroplast"/>
<protein>
    <recommendedName>
        <fullName evidence="1">Photosystem II reaction center protein T</fullName>
        <shortName evidence="1">PSII-T</shortName>
    </recommendedName>
</protein>
<organism>
    <name type="scientific">Zygnema circumcarinatum</name>
    <name type="common">Green alga</name>
    <dbReference type="NCBI Taxonomy" id="35869"/>
    <lineage>
        <taxon>Eukaryota</taxon>
        <taxon>Viridiplantae</taxon>
        <taxon>Streptophyta</taxon>
        <taxon>Zygnematophyceae</taxon>
        <taxon>Zygnematophycidae</taxon>
        <taxon>Zygnematales</taxon>
        <taxon>Zygnemataceae</taxon>
        <taxon>Zygnema</taxon>
    </lineage>
</organism>
<gene>
    <name evidence="1" type="primary">psbT</name>
</gene>
<evidence type="ECO:0000255" key="1">
    <source>
        <dbReference type="HAMAP-Rule" id="MF_00808"/>
    </source>
</evidence>
<keyword id="KW-0150">Chloroplast</keyword>
<keyword id="KW-0472">Membrane</keyword>
<keyword id="KW-0602">Photosynthesis</keyword>
<keyword id="KW-0604">Photosystem II</keyword>
<keyword id="KW-0934">Plastid</keyword>
<keyword id="KW-0793">Thylakoid</keyword>
<keyword id="KW-0812">Transmembrane</keyword>
<keyword id="KW-1133">Transmembrane helix</keyword>
<accession>Q32RQ5</accession>
<proteinExistence type="inferred from homology"/>
<reference key="1">
    <citation type="journal article" date="2005" name="BMC Biol.">
        <title>The complete chloroplast DNA sequences of the charophycean green algae Staurastrum and Zygnema reveal that the chloroplast genome underwent extensive changes during the evolution of the Zygnematales.</title>
        <authorList>
            <person name="Turmel M."/>
            <person name="Otis C."/>
            <person name="Lemieux C."/>
        </authorList>
    </citation>
    <scope>NUCLEOTIDE SEQUENCE [LARGE SCALE GENOMIC DNA]</scope>
</reference>
<feature type="chain" id="PRO_0000276319" description="Photosystem II reaction center protein T">
    <location>
        <begin position="1"/>
        <end position="35"/>
    </location>
</feature>
<feature type="transmembrane region" description="Helical" evidence="1">
    <location>
        <begin position="3"/>
        <end position="23"/>
    </location>
</feature>
<name>PSBT_ZYGCR</name>
<dbReference type="EMBL" id="AY958086">
    <property type="protein sequence ID" value="AAX45849.1"/>
    <property type="molecule type" value="Genomic_DNA"/>
</dbReference>
<dbReference type="RefSeq" id="YP_636471.1">
    <property type="nucleotide sequence ID" value="NC_008117.1"/>
</dbReference>
<dbReference type="SMR" id="Q32RQ5"/>
<dbReference type="GeneID" id="4108169"/>
<dbReference type="GO" id="GO:0009535">
    <property type="term" value="C:chloroplast thylakoid membrane"/>
    <property type="evidence" value="ECO:0007669"/>
    <property type="project" value="UniProtKB-SubCell"/>
</dbReference>
<dbReference type="GO" id="GO:0009539">
    <property type="term" value="C:photosystem II reaction center"/>
    <property type="evidence" value="ECO:0007669"/>
    <property type="project" value="InterPro"/>
</dbReference>
<dbReference type="GO" id="GO:0015979">
    <property type="term" value="P:photosynthesis"/>
    <property type="evidence" value="ECO:0007669"/>
    <property type="project" value="UniProtKB-UniRule"/>
</dbReference>
<dbReference type="HAMAP" id="MF_00808">
    <property type="entry name" value="PSII_PsbT"/>
    <property type="match status" value="1"/>
</dbReference>
<dbReference type="InterPro" id="IPR001743">
    <property type="entry name" value="PSII_PsbT"/>
</dbReference>
<dbReference type="InterPro" id="IPR037268">
    <property type="entry name" value="PSII_PsbT_sf"/>
</dbReference>
<dbReference type="PANTHER" id="PTHR36411">
    <property type="match status" value="1"/>
</dbReference>
<dbReference type="PANTHER" id="PTHR36411:SF2">
    <property type="entry name" value="PHOTOSYSTEM II REACTION CENTER PROTEIN T"/>
    <property type="match status" value="1"/>
</dbReference>
<dbReference type="Pfam" id="PF01405">
    <property type="entry name" value="PsbT"/>
    <property type="match status" value="1"/>
</dbReference>
<dbReference type="SUPFAM" id="SSF161029">
    <property type="entry name" value="Photosystem II reaction center protein T, PsbT"/>
    <property type="match status" value="1"/>
</dbReference>